<gene>
    <name evidence="1" type="primary">metN2</name>
    <name type="ordered locus">BCE33L0284</name>
</gene>
<evidence type="ECO:0000255" key="1">
    <source>
        <dbReference type="HAMAP-Rule" id="MF_01719"/>
    </source>
</evidence>
<keyword id="KW-0029">Amino-acid transport</keyword>
<keyword id="KW-0067">ATP-binding</keyword>
<keyword id="KW-1003">Cell membrane</keyword>
<keyword id="KW-0472">Membrane</keyword>
<keyword id="KW-0547">Nucleotide-binding</keyword>
<keyword id="KW-1278">Translocase</keyword>
<keyword id="KW-0813">Transport</keyword>
<dbReference type="EC" id="7.4.2.11" evidence="1"/>
<dbReference type="EMBL" id="CP000001">
    <property type="protein sequence ID" value="AAU19955.1"/>
    <property type="molecule type" value="Genomic_DNA"/>
</dbReference>
<dbReference type="RefSeq" id="WP_000622989.1">
    <property type="nucleotide sequence ID" value="NZ_CP009968.1"/>
</dbReference>
<dbReference type="SMR" id="Q63GR8"/>
<dbReference type="KEGG" id="bcz:BCE33L0284"/>
<dbReference type="PATRIC" id="fig|288681.22.peg.5323"/>
<dbReference type="Proteomes" id="UP000002612">
    <property type="component" value="Chromosome"/>
</dbReference>
<dbReference type="GO" id="GO:0005886">
    <property type="term" value="C:plasma membrane"/>
    <property type="evidence" value="ECO:0007669"/>
    <property type="project" value="UniProtKB-SubCell"/>
</dbReference>
<dbReference type="GO" id="GO:0033232">
    <property type="term" value="F:ABC-type D-methionine transporter activity"/>
    <property type="evidence" value="ECO:0007669"/>
    <property type="project" value="UniProtKB-EC"/>
</dbReference>
<dbReference type="GO" id="GO:0005524">
    <property type="term" value="F:ATP binding"/>
    <property type="evidence" value="ECO:0007669"/>
    <property type="project" value="UniProtKB-KW"/>
</dbReference>
<dbReference type="GO" id="GO:0016887">
    <property type="term" value="F:ATP hydrolysis activity"/>
    <property type="evidence" value="ECO:0007669"/>
    <property type="project" value="InterPro"/>
</dbReference>
<dbReference type="CDD" id="cd03258">
    <property type="entry name" value="ABC_MetN_methionine_transporter"/>
    <property type="match status" value="1"/>
</dbReference>
<dbReference type="FunFam" id="3.40.50.300:FF:000233">
    <property type="entry name" value="Methionine import ATP-binding protein MetN"/>
    <property type="match status" value="1"/>
</dbReference>
<dbReference type="Gene3D" id="3.30.70.260">
    <property type="match status" value="1"/>
</dbReference>
<dbReference type="Gene3D" id="3.40.50.300">
    <property type="entry name" value="P-loop containing nucleotide triphosphate hydrolases"/>
    <property type="match status" value="1"/>
</dbReference>
<dbReference type="InterPro" id="IPR003593">
    <property type="entry name" value="AAA+_ATPase"/>
</dbReference>
<dbReference type="InterPro" id="IPR003439">
    <property type="entry name" value="ABC_transporter-like_ATP-bd"/>
</dbReference>
<dbReference type="InterPro" id="IPR017871">
    <property type="entry name" value="ABC_transporter-like_CS"/>
</dbReference>
<dbReference type="InterPro" id="IPR045865">
    <property type="entry name" value="ACT-like_dom_sf"/>
</dbReference>
<dbReference type="InterPro" id="IPR041701">
    <property type="entry name" value="MetN_ABC"/>
</dbReference>
<dbReference type="InterPro" id="IPR050086">
    <property type="entry name" value="MetN_ABC_transporter-like"/>
</dbReference>
<dbReference type="InterPro" id="IPR018449">
    <property type="entry name" value="NIL_domain"/>
</dbReference>
<dbReference type="InterPro" id="IPR027417">
    <property type="entry name" value="P-loop_NTPase"/>
</dbReference>
<dbReference type="PANTHER" id="PTHR43166">
    <property type="entry name" value="AMINO ACID IMPORT ATP-BINDING PROTEIN"/>
    <property type="match status" value="1"/>
</dbReference>
<dbReference type="PANTHER" id="PTHR43166:SF30">
    <property type="entry name" value="METHIONINE IMPORT ATP-BINDING PROTEIN METN"/>
    <property type="match status" value="1"/>
</dbReference>
<dbReference type="Pfam" id="PF00005">
    <property type="entry name" value="ABC_tran"/>
    <property type="match status" value="1"/>
</dbReference>
<dbReference type="Pfam" id="PF09383">
    <property type="entry name" value="NIL"/>
    <property type="match status" value="1"/>
</dbReference>
<dbReference type="SMART" id="SM00382">
    <property type="entry name" value="AAA"/>
    <property type="match status" value="1"/>
</dbReference>
<dbReference type="SMART" id="SM00930">
    <property type="entry name" value="NIL"/>
    <property type="match status" value="1"/>
</dbReference>
<dbReference type="SUPFAM" id="SSF55021">
    <property type="entry name" value="ACT-like"/>
    <property type="match status" value="1"/>
</dbReference>
<dbReference type="SUPFAM" id="SSF52540">
    <property type="entry name" value="P-loop containing nucleoside triphosphate hydrolases"/>
    <property type="match status" value="1"/>
</dbReference>
<dbReference type="PROSITE" id="PS00211">
    <property type="entry name" value="ABC_TRANSPORTER_1"/>
    <property type="match status" value="1"/>
</dbReference>
<dbReference type="PROSITE" id="PS50893">
    <property type="entry name" value="ABC_TRANSPORTER_2"/>
    <property type="match status" value="1"/>
</dbReference>
<dbReference type="PROSITE" id="PS51264">
    <property type="entry name" value="METN"/>
    <property type="match status" value="1"/>
</dbReference>
<sequence length="339" mass="37977">MISFNNVSKVYESGGQSVHAVEDVTLSVEKGEIFGIIGFSGAGKSTLLRLVNMLERPTAGTISIDDKEITSLSTKELRKLRQRIGMIFQSFNLFNSRTVFGNIAYPLRLAKVPKNEIKERVNELLKFVGLEDKANNYPEQLSGGQKQRVGIARALATSPDILICDEATSALDPETTTEILNLLKKVNREYNLTILLITHEMHVVKEICHRVAVMEKGKVIEEGKLFDVFTQPKTKTTQNFVRSVINDHLPESVLAKIQNGGQIYRLTFTGEETGQPVLSYIAKNYNVDVNVLYGNIIELQNVLFGNLLVELQGEQREIQKALQHLRLQVQLKEVEAHAS</sequence>
<proteinExistence type="inferred from homology"/>
<protein>
    <recommendedName>
        <fullName evidence="1">Methionine import ATP-binding protein MetN 2</fullName>
        <ecNumber evidence="1">7.4.2.11</ecNumber>
    </recommendedName>
</protein>
<feature type="chain" id="PRO_0000270239" description="Methionine import ATP-binding protein MetN 2">
    <location>
        <begin position="1"/>
        <end position="339"/>
    </location>
</feature>
<feature type="domain" description="ABC transporter" evidence="1">
    <location>
        <begin position="2"/>
        <end position="241"/>
    </location>
</feature>
<feature type="binding site" evidence="1">
    <location>
        <begin position="38"/>
        <end position="45"/>
    </location>
    <ligand>
        <name>ATP</name>
        <dbReference type="ChEBI" id="CHEBI:30616"/>
    </ligand>
</feature>
<name>METN2_BACCZ</name>
<reference key="1">
    <citation type="journal article" date="2006" name="J. Bacteriol.">
        <title>Pathogenomic sequence analysis of Bacillus cereus and Bacillus thuringiensis isolates closely related to Bacillus anthracis.</title>
        <authorList>
            <person name="Han C.S."/>
            <person name="Xie G."/>
            <person name="Challacombe J.F."/>
            <person name="Altherr M.R."/>
            <person name="Bhotika S.S."/>
            <person name="Bruce D."/>
            <person name="Campbell C.S."/>
            <person name="Campbell M.L."/>
            <person name="Chen J."/>
            <person name="Chertkov O."/>
            <person name="Cleland C."/>
            <person name="Dimitrijevic M."/>
            <person name="Doggett N.A."/>
            <person name="Fawcett J.J."/>
            <person name="Glavina T."/>
            <person name="Goodwin L.A."/>
            <person name="Hill K.K."/>
            <person name="Hitchcock P."/>
            <person name="Jackson P.J."/>
            <person name="Keim P."/>
            <person name="Kewalramani A.R."/>
            <person name="Longmire J."/>
            <person name="Lucas S."/>
            <person name="Malfatti S."/>
            <person name="McMurry K."/>
            <person name="Meincke L.J."/>
            <person name="Misra M."/>
            <person name="Moseman B.L."/>
            <person name="Mundt M."/>
            <person name="Munk A.C."/>
            <person name="Okinaka R.T."/>
            <person name="Parson-Quintana B."/>
            <person name="Reilly L.P."/>
            <person name="Richardson P."/>
            <person name="Robinson D.L."/>
            <person name="Rubin E."/>
            <person name="Saunders E."/>
            <person name="Tapia R."/>
            <person name="Tesmer J.G."/>
            <person name="Thayer N."/>
            <person name="Thompson L.S."/>
            <person name="Tice H."/>
            <person name="Ticknor L.O."/>
            <person name="Wills P.L."/>
            <person name="Brettin T.S."/>
            <person name="Gilna P."/>
        </authorList>
    </citation>
    <scope>NUCLEOTIDE SEQUENCE [LARGE SCALE GENOMIC DNA]</scope>
    <source>
        <strain>ZK / E33L</strain>
    </source>
</reference>
<comment type="function">
    <text evidence="1">Part of the ABC transporter complex MetNIQ involved in methionine import. Responsible for energy coupling to the transport system.</text>
</comment>
<comment type="catalytic activity">
    <reaction evidence="1">
        <text>L-methionine(out) + ATP + H2O = L-methionine(in) + ADP + phosphate + H(+)</text>
        <dbReference type="Rhea" id="RHEA:29779"/>
        <dbReference type="ChEBI" id="CHEBI:15377"/>
        <dbReference type="ChEBI" id="CHEBI:15378"/>
        <dbReference type="ChEBI" id="CHEBI:30616"/>
        <dbReference type="ChEBI" id="CHEBI:43474"/>
        <dbReference type="ChEBI" id="CHEBI:57844"/>
        <dbReference type="ChEBI" id="CHEBI:456216"/>
        <dbReference type="EC" id="7.4.2.11"/>
    </reaction>
</comment>
<comment type="catalytic activity">
    <reaction evidence="1">
        <text>D-methionine(out) + ATP + H2O = D-methionine(in) + ADP + phosphate + H(+)</text>
        <dbReference type="Rhea" id="RHEA:29767"/>
        <dbReference type="ChEBI" id="CHEBI:15377"/>
        <dbReference type="ChEBI" id="CHEBI:15378"/>
        <dbReference type="ChEBI" id="CHEBI:30616"/>
        <dbReference type="ChEBI" id="CHEBI:43474"/>
        <dbReference type="ChEBI" id="CHEBI:57932"/>
        <dbReference type="ChEBI" id="CHEBI:456216"/>
        <dbReference type="EC" id="7.4.2.11"/>
    </reaction>
</comment>
<comment type="subunit">
    <text evidence="1">The complex is composed of two ATP-binding proteins (MetN), two transmembrane proteins (MetI) and a solute-binding protein (MetQ).</text>
</comment>
<comment type="subcellular location">
    <subcellularLocation>
        <location evidence="1">Cell membrane</location>
        <topology evidence="1">Peripheral membrane protein</topology>
    </subcellularLocation>
</comment>
<comment type="similarity">
    <text evidence="1">Belongs to the ABC transporter superfamily. Methionine importer (TC 3.A.1.24) family.</text>
</comment>
<organism>
    <name type="scientific">Bacillus cereus (strain ZK / E33L)</name>
    <dbReference type="NCBI Taxonomy" id="288681"/>
    <lineage>
        <taxon>Bacteria</taxon>
        <taxon>Bacillati</taxon>
        <taxon>Bacillota</taxon>
        <taxon>Bacilli</taxon>
        <taxon>Bacillales</taxon>
        <taxon>Bacillaceae</taxon>
        <taxon>Bacillus</taxon>
        <taxon>Bacillus cereus group</taxon>
    </lineage>
</organism>
<accession>Q63GR8</accession>